<reference key="1">
    <citation type="submission" date="2008-12" db="EMBL/GenBank/DDBJ databases">
        <title>Complete sequence of chromosome of Shewanella baltica OS223.</title>
        <authorList>
            <consortium name="US DOE Joint Genome Institute"/>
            <person name="Lucas S."/>
            <person name="Copeland A."/>
            <person name="Lapidus A."/>
            <person name="Glavina del Rio T."/>
            <person name="Dalin E."/>
            <person name="Tice H."/>
            <person name="Bruce D."/>
            <person name="Goodwin L."/>
            <person name="Pitluck S."/>
            <person name="Chertkov O."/>
            <person name="Meincke L."/>
            <person name="Brettin T."/>
            <person name="Detter J.C."/>
            <person name="Han C."/>
            <person name="Kuske C.R."/>
            <person name="Larimer F."/>
            <person name="Land M."/>
            <person name="Hauser L."/>
            <person name="Kyrpides N."/>
            <person name="Ovchinnikova G."/>
            <person name="Brettar I."/>
            <person name="Rodrigues J."/>
            <person name="Konstantinidis K."/>
            <person name="Tiedje J."/>
        </authorList>
    </citation>
    <scope>NUCLEOTIDE SEQUENCE [LARGE SCALE GENOMIC DNA]</scope>
    <source>
        <strain>OS223</strain>
    </source>
</reference>
<comment type="function">
    <text evidence="1">Binds as a heterodimer with protein bS6 to the central domain of the 16S rRNA, where it helps stabilize the platform of the 30S subunit.</text>
</comment>
<comment type="subunit">
    <text evidence="1">Part of the 30S ribosomal subunit. Forms a tight heterodimer with protein bS6.</text>
</comment>
<comment type="similarity">
    <text evidence="1">Belongs to the bacterial ribosomal protein bS18 family.</text>
</comment>
<evidence type="ECO:0000255" key="1">
    <source>
        <dbReference type="HAMAP-Rule" id="MF_00270"/>
    </source>
</evidence>
<evidence type="ECO:0000305" key="2"/>
<protein>
    <recommendedName>
        <fullName evidence="1">Small ribosomal subunit protein bS18</fullName>
    </recommendedName>
    <alternativeName>
        <fullName evidence="2">30S ribosomal protein S18</fullName>
    </alternativeName>
</protein>
<keyword id="KW-0687">Ribonucleoprotein</keyword>
<keyword id="KW-0689">Ribosomal protein</keyword>
<keyword id="KW-0694">RNA-binding</keyword>
<keyword id="KW-0699">rRNA-binding</keyword>
<dbReference type="EMBL" id="CP001252">
    <property type="protein sequence ID" value="ACK45253.1"/>
    <property type="molecule type" value="Genomic_DNA"/>
</dbReference>
<dbReference type="RefSeq" id="WP_006083042.1">
    <property type="nucleotide sequence ID" value="NC_011663.1"/>
</dbReference>
<dbReference type="SMR" id="B8E9N8"/>
<dbReference type="GeneID" id="94726693"/>
<dbReference type="KEGG" id="sbp:Sbal223_0734"/>
<dbReference type="HOGENOM" id="CLU_148710_2_3_6"/>
<dbReference type="Proteomes" id="UP000002507">
    <property type="component" value="Chromosome"/>
</dbReference>
<dbReference type="GO" id="GO:0022627">
    <property type="term" value="C:cytosolic small ribosomal subunit"/>
    <property type="evidence" value="ECO:0007669"/>
    <property type="project" value="TreeGrafter"/>
</dbReference>
<dbReference type="GO" id="GO:0070181">
    <property type="term" value="F:small ribosomal subunit rRNA binding"/>
    <property type="evidence" value="ECO:0007669"/>
    <property type="project" value="TreeGrafter"/>
</dbReference>
<dbReference type="GO" id="GO:0003735">
    <property type="term" value="F:structural constituent of ribosome"/>
    <property type="evidence" value="ECO:0007669"/>
    <property type="project" value="InterPro"/>
</dbReference>
<dbReference type="GO" id="GO:0006412">
    <property type="term" value="P:translation"/>
    <property type="evidence" value="ECO:0007669"/>
    <property type="project" value="UniProtKB-UniRule"/>
</dbReference>
<dbReference type="FunFam" id="4.10.640.10:FF:000001">
    <property type="entry name" value="30S ribosomal protein S18"/>
    <property type="match status" value="1"/>
</dbReference>
<dbReference type="Gene3D" id="4.10.640.10">
    <property type="entry name" value="Ribosomal protein S18"/>
    <property type="match status" value="1"/>
</dbReference>
<dbReference type="HAMAP" id="MF_00270">
    <property type="entry name" value="Ribosomal_bS18"/>
    <property type="match status" value="1"/>
</dbReference>
<dbReference type="InterPro" id="IPR001648">
    <property type="entry name" value="Ribosomal_bS18"/>
</dbReference>
<dbReference type="InterPro" id="IPR018275">
    <property type="entry name" value="Ribosomal_bS18_CS"/>
</dbReference>
<dbReference type="InterPro" id="IPR036870">
    <property type="entry name" value="Ribosomal_bS18_sf"/>
</dbReference>
<dbReference type="NCBIfam" id="TIGR00165">
    <property type="entry name" value="S18"/>
    <property type="match status" value="1"/>
</dbReference>
<dbReference type="PANTHER" id="PTHR13479">
    <property type="entry name" value="30S RIBOSOMAL PROTEIN S18"/>
    <property type="match status" value="1"/>
</dbReference>
<dbReference type="PANTHER" id="PTHR13479:SF40">
    <property type="entry name" value="SMALL RIBOSOMAL SUBUNIT PROTEIN BS18M"/>
    <property type="match status" value="1"/>
</dbReference>
<dbReference type="Pfam" id="PF01084">
    <property type="entry name" value="Ribosomal_S18"/>
    <property type="match status" value="1"/>
</dbReference>
<dbReference type="PRINTS" id="PR00974">
    <property type="entry name" value="RIBOSOMALS18"/>
</dbReference>
<dbReference type="SUPFAM" id="SSF46911">
    <property type="entry name" value="Ribosomal protein S18"/>
    <property type="match status" value="1"/>
</dbReference>
<dbReference type="PROSITE" id="PS00057">
    <property type="entry name" value="RIBOSOMAL_S18"/>
    <property type="match status" value="1"/>
</dbReference>
<name>RS18_SHEB2</name>
<accession>B8E9N8</accession>
<gene>
    <name evidence="1" type="primary">rpsR</name>
    <name type="ordered locus">Sbal223_0734</name>
</gene>
<feature type="chain" id="PRO_1000196528" description="Small ribosomal subunit protein bS18">
    <location>
        <begin position="1"/>
        <end position="75"/>
    </location>
</feature>
<proteinExistence type="inferred from homology"/>
<sequence length="75" mass="8845">MARYFRRRKFCRFTAEGVAEIDYKDIVTLKNYITESGKIVPSRITGTSAKYQRQLARAIKRARYLSLLPYTDLHQ</sequence>
<organism>
    <name type="scientific">Shewanella baltica (strain OS223)</name>
    <dbReference type="NCBI Taxonomy" id="407976"/>
    <lineage>
        <taxon>Bacteria</taxon>
        <taxon>Pseudomonadati</taxon>
        <taxon>Pseudomonadota</taxon>
        <taxon>Gammaproteobacteria</taxon>
        <taxon>Alteromonadales</taxon>
        <taxon>Shewanellaceae</taxon>
        <taxon>Shewanella</taxon>
    </lineage>
</organism>